<reference key="1">
    <citation type="journal article" date="1990" name="Mol. Gen. Genet.">
        <title>The virB operon of Agrobacterium tumefaciens pTiC58 encodes 11 open reading frames.</title>
        <authorList>
            <person name="Kuldau G.A."/>
            <person name="de Vos G."/>
            <person name="Owen J."/>
            <person name="McCaffrey G."/>
            <person name="Zambryski P."/>
        </authorList>
    </citation>
    <scope>NUCLEOTIDE SEQUENCE [GENOMIC DNA]</scope>
</reference>
<reference key="2">
    <citation type="journal article" date="1990" name="Plasmid">
        <title>Molecular characterization of the vir regulon of Agrobacterium tumefaciens: complete nucleotide sequence and gene organization of the 28.63-kbp regulon cloned as a single unit.</title>
        <authorList>
            <person name="Rogowsky P.M."/>
            <person name="Powell B.S."/>
            <person name="Shirasu K."/>
            <person name="Lin T.-S."/>
            <person name="Morel P."/>
            <person name="Zyprian E.M."/>
            <person name="Steck T.R."/>
            <person name="Kado C.I."/>
        </authorList>
    </citation>
    <scope>NUCLEOTIDE SEQUENCE [GENOMIC DNA]</scope>
</reference>
<reference key="3">
    <citation type="journal article" date="1990" name="Mol. Microbiol.">
        <title>Characterization of the virB operon of an Agrobacterium tumefaciens Ti plasmid: nucleotide sequence and protein analysis.</title>
        <authorList>
            <person name="Shirasu K."/>
            <person name="Morel P."/>
            <person name="Kado C.I."/>
        </authorList>
    </citation>
    <scope>NUCLEOTIDE SEQUENCE [GENOMIC DNA]</scope>
</reference>
<reference key="4">
    <citation type="journal article" date="2001" name="Science">
        <title>The genome of the natural genetic engineer Agrobacterium tumefaciens C58.</title>
        <authorList>
            <person name="Wood D.W."/>
            <person name="Setubal J.C."/>
            <person name="Kaul R."/>
            <person name="Monks D.E."/>
            <person name="Kitajima J.P."/>
            <person name="Okura V.K."/>
            <person name="Zhou Y."/>
            <person name="Chen L."/>
            <person name="Wood G.E."/>
            <person name="Almeida N.F. Jr."/>
            <person name="Woo L."/>
            <person name="Chen Y."/>
            <person name="Paulsen I.T."/>
            <person name="Eisen J.A."/>
            <person name="Karp P.D."/>
            <person name="Bovee D. Sr."/>
            <person name="Chapman P."/>
            <person name="Clendenning J."/>
            <person name="Deatherage G."/>
            <person name="Gillet W."/>
            <person name="Grant C."/>
            <person name="Kutyavin T."/>
            <person name="Levy R."/>
            <person name="Li M.-J."/>
            <person name="McClelland E."/>
            <person name="Palmieri A."/>
            <person name="Raymond C."/>
            <person name="Rouse G."/>
            <person name="Saenphimmachak C."/>
            <person name="Wu Z."/>
            <person name="Romero P."/>
            <person name="Gordon D."/>
            <person name="Zhang S."/>
            <person name="Yoo H."/>
            <person name="Tao Y."/>
            <person name="Biddle P."/>
            <person name="Jung M."/>
            <person name="Krespan W."/>
            <person name="Perry M."/>
            <person name="Gordon-Kamm B."/>
            <person name="Liao L."/>
            <person name="Kim S."/>
            <person name="Hendrick C."/>
            <person name="Zhao Z.-Y."/>
            <person name="Dolan M."/>
            <person name="Chumley F."/>
            <person name="Tingey S.V."/>
            <person name="Tomb J.-F."/>
            <person name="Gordon M.P."/>
            <person name="Olson M.V."/>
            <person name="Nester E.W."/>
        </authorList>
    </citation>
    <scope>NUCLEOTIDE SEQUENCE [LARGE SCALE GENOMIC DNA]</scope>
</reference>
<reference key="5">
    <citation type="journal article" date="2001" name="Science">
        <title>Genome sequence of the plant pathogen and biotechnology agent Agrobacterium tumefaciens C58.</title>
        <authorList>
            <person name="Goodner B."/>
            <person name="Hinkle G."/>
            <person name="Gattung S."/>
            <person name="Miller N."/>
            <person name="Blanchard M."/>
            <person name="Qurollo B."/>
            <person name="Goldman B.S."/>
            <person name="Cao Y."/>
            <person name="Askenazi M."/>
            <person name="Halling C."/>
            <person name="Mullin L."/>
            <person name="Houmiel K."/>
            <person name="Gordon J."/>
            <person name="Vaudin M."/>
            <person name="Iartchouk O."/>
            <person name="Epp A."/>
            <person name="Liu F."/>
            <person name="Wollam C."/>
            <person name="Allinger M."/>
            <person name="Doughty D."/>
            <person name="Scott C."/>
            <person name="Lappas C."/>
            <person name="Markelz B."/>
            <person name="Flanagan C."/>
            <person name="Crowell C."/>
            <person name="Gurson J."/>
            <person name="Lomo C."/>
            <person name="Sear C."/>
            <person name="Strub G."/>
            <person name="Cielo C."/>
            <person name="Slater S."/>
        </authorList>
    </citation>
    <scope>NUCLEOTIDE SEQUENCE [LARGE SCALE GENOMIC DNA]</scope>
    <source>
        <strain>C58 / ATCC 33970</strain>
    </source>
</reference>
<reference key="6">
    <citation type="journal article" date="1987" name="Mol. Microbiol.">
        <title>Nucleotide sequence of the virG locus of the Agrobacterium tumefaciens plasmid pTiC58.</title>
        <authorList>
            <person name="Powell B.S."/>
            <person name="Powell G.K."/>
            <person name="Morris R.O."/>
            <person name="Rogowsky P.M."/>
            <person name="Kado C.I."/>
        </authorList>
    </citation>
    <scope>NUCLEOTIDE SEQUENCE [GENOMIC DNA] OF 94-344</scope>
</reference>
<feature type="chain" id="PRO_0000207302" description="Protein VirB11">
    <location>
        <begin position="1"/>
        <end position="344"/>
    </location>
</feature>
<feature type="binding site" evidence="1">
    <location>
        <begin position="169"/>
        <end position="176"/>
    </location>
    <ligand>
        <name>ATP</name>
        <dbReference type="ChEBI" id="CHEBI:30616"/>
    </ligand>
</feature>
<feature type="sequence conflict" description="In Ref. 1; CAA37364, 2; AAA91601 and 6; AAD15210/CAA68594." evidence="2" ref="1 2 6">
    <original>D</original>
    <variation>A</variation>
    <location>
        <position position="136"/>
    </location>
</feature>
<gene>
    <name type="primary">virB11</name>
    <name type="ordered locus">Atu6177</name>
    <name type="ORF">AGR_pTi_14</name>
</gene>
<protein>
    <recommendedName>
        <fullName>Protein VirB11</fullName>
    </recommendedName>
</protein>
<evidence type="ECO:0000255" key="1"/>
<evidence type="ECO:0000305" key="2"/>
<dbReference type="EMBL" id="X53264">
    <property type="protein sequence ID" value="CAA37364.1"/>
    <property type="molecule type" value="Genomic_DNA"/>
</dbReference>
<dbReference type="EMBL" id="J03320">
    <property type="protein sequence ID" value="AAA91601.1"/>
    <property type="molecule type" value="Genomic_DNA"/>
</dbReference>
<dbReference type="EMBL" id="AE007871">
    <property type="protein sequence ID" value="AAK90939.2"/>
    <property type="molecule type" value="Genomic_DNA"/>
</dbReference>
<dbReference type="EMBL" id="Y00535">
    <property type="protein sequence ID" value="CAA68594.1"/>
    <property type="molecule type" value="Genomic_DNA"/>
</dbReference>
<dbReference type="EMBL" id="M36786">
    <property type="protein sequence ID" value="AAD15210.1"/>
    <property type="molecule type" value="Genomic_DNA"/>
</dbReference>
<dbReference type="PIR" id="AG3249">
    <property type="entry name" value="AG3249"/>
</dbReference>
<dbReference type="PIR" id="S12351">
    <property type="entry name" value="BXAG58"/>
</dbReference>
<dbReference type="RefSeq" id="NP_396498.2">
    <property type="nucleotide sequence ID" value="NC_003065.3"/>
</dbReference>
<dbReference type="RefSeq" id="WP_010974918.1">
    <property type="nucleotide sequence ID" value="NC_003065.3"/>
</dbReference>
<dbReference type="SMR" id="P07169"/>
<dbReference type="EnsemblBacteria" id="AAK90939">
    <property type="protein sequence ID" value="AAK90939"/>
    <property type="gene ID" value="Atu6177"/>
</dbReference>
<dbReference type="GeneID" id="86882432"/>
<dbReference type="KEGG" id="atu:Atu6177"/>
<dbReference type="PATRIC" id="fig|176299.10.peg.5371"/>
<dbReference type="HOGENOM" id="CLU_005379_3_1_5"/>
<dbReference type="OrthoDB" id="9810761at2"/>
<dbReference type="PhylomeDB" id="P07169"/>
<dbReference type="BioCyc" id="AGRO:ATU6177-MONOMER"/>
<dbReference type="BRENDA" id="7.4.2.8">
    <property type="organism ID" value="200"/>
</dbReference>
<dbReference type="Proteomes" id="UP000000813">
    <property type="component" value="Plasmid Ti"/>
</dbReference>
<dbReference type="GO" id="GO:0005737">
    <property type="term" value="C:cytoplasm"/>
    <property type="evidence" value="ECO:0007669"/>
    <property type="project" value="UniProtKB-SubCell"/>
</dbReference>
<dbReference type="GO" id="GO:0043684">
    <property type="term" value="C:type IV secretion system complex"/>
    <property type="evidence" value="ECO:0000317"/>
    <property type="project" value="PAMGO_GAT"/>
</dbReference>
<dbReference type="GO" id="GO:0005524">
    <property type="term" value="F:ATP binding"/>
    <property type="evidence" value="ECO:0007669"/>
    <property type="project" value="UniProtKB-KW"/>
</dbReference>
<dbReference type="GO" id="GO:0016887">
    <property type="term" value="F:ATP hydrolysis activity"/>
    <property type="evidence" value="ECO:0007669"/>
    <property type="project" value="InterPro"/>
</dbReference>
<dbReference type="GO" id="GO:0030255">
    <property type="term" value="P:protein secretion by the type IV secretion system"/>
    <property type="evidence" value="ECO:0000317"/>
    <property type="project" value="PAMGO_GAT"/>
</dbReference>
<dbReference type="CDD" id="cd01130">
    <property type="entry name" value="VirB11-like_ATPase"/>
    <property type="match status" value="1"/>
</dbReference>
<dbReference type="FunFam" id="3.40.50.300:FF:002158">
    <property type="entry name" value="P-type DNA transfer ATPase VirB11"/>
    <property type="match status" value="1"/>
</dbReference>
<dbReference type="Gene3D" id="3.30.450.90">
    <property type="match status" value="1"/>
</dbReference>
<dbReference type="Gene3D" id="3.40.50.300">
    <property type="entry name" value="P-loop containing nucleotide triphosphate hydrolases"/>
    <property type="match status" value="1"/>
</dbReference>
<dbReference type="InterPro" id="IPR027417">
    <property type="entry name" value="P-loop_NTPase"/>
</dbReference>
<dbReference type="InterPro" id="IPR001482">
    <property type="entry name" value="T2SS/T4SS_dom"/>
</dbReference>
<dbReference type="InterPro" id="IPR050921">
    <property type="entry name" value="T4SS_GSP_E_ATPase"/>
</dbReference>
<dbReference type="InterPro" id="IPR014155">
    <property type="entry name" value="VirB11"/>
</dbReference>
<dbReference type="NCBIfam" id="NF010425">
    <property type="entry name" value="PRK13851.1"/>
    <property type="match status" value="1"/>
</dbReference>
<dbReference type="NCBIfam" id="TIGR02788">
    <property type="entry name" value="VirB11"/>
    <property type="match status" value="1"/>
</dbReference>
<dbReference type="PANTHER" id="PTHR30486">
    <property type="entry name" value="TWITCHING MOTILITY PROTEIN PILT"/>
    <property type="match status" value="1"/>
</dbReference>
<dbReference type="PANTHER" id="PTHR30486:SF6">
    <property type="entry name" value="TYPE IV PILUS RETRACTATION ATPASE PILT"/>
    <property type="match status" value="1"/>
</dbReference>
<dbReference type="Pfam" id="PF00437">
    <property type="entry name" value="T2SSE"/>
    <property type="match status" value="1"/>
</dbReference>
<dbReference type="SUPFAM" id="SSF52540">
    <property type="entry name" value="P-loop containing nucleoside triphosphate hydrolases"/>
    <property type="match status" value="1"/>
</dbReference>
<dbReference type="PROSITE" id="PS00662">
    <property type="entry name" value="T2SP_E"/>
    <property type="match status" value="1"/>
</dbReference>
<proteinExistence type="inferred from homology"/>
<name>VIRBB_AGRFC</name>
<organism>
    <name type="scientific">Agrobacterium fabrum (strain C58 / ATCC 33970)</name>
    <name type="common">Agrobacterium tumefaciens (strain C58)</name>
    <dbReference type="NCBI Taxonomy" id="176299"/>
    <lineage>
        <taxon>Bacteria</taxon>
        <taxon>Pseudomonadati</taxon>
        <taxon>Pseudomonadota</taxon>
        <taxon>Alphaproteobacteria</taxon>
        <taxon>Hyphomicrobiales</taxon>
        <taxon>Rhizobiaceae</taxon>
        <taxon>Rhizobium/Agrobacterium group</taxon>
        <taxon>Agrobacterium</taxon>
        <taxon>Agrobacterium tumefaciens complex</taxon>
    </lineage>
</organism>
<geneLocation type="plasmid">
    <name>pTiC58</name>
</geneLocation>
<sequence length="344" mass="38140">MEVDPQLRILLKPILEWLDDPRTEEVAINRPGEAFVRQAGAFLKFPLPVSYDDLEDIAILAGALRKQDVGPRNPLCATELPDGERLQICLPPTVPSGTVSLTIRRPSSRVSSLKEVSSRYDAPRWNQWKERKKRHDQHDEAILRYYDNGDLEAFLHACVVGRLTMLLCGPTGSGKTTMSKTLINAIPPQERLITIEDTLELVIPHENHVRLLYSKNGAGLGAVTAEHLLQASLRMRPDRILLGEIRDDAAWAYLSEVVSGHPGSISTIHGANPVQGFKKLFSLVKSSAQGASLEDRTLIDMLATAVDVIVPFRAHGDIYEVGEIWLAADARRRGETIGDLLNQQ</sequence>
<keyword id="KW-0067">ATP-binding</keyword>
<keyword id="KW-0192">Crown gall tumor</keyword>
<keyword id="KW-0963">Cytoplasm</keyword>
<keyword id="KW-0547">Nucleotide-binding</keyword>
<keyword id="KW-0597">Phosphoprotein</keyword>
<keyword id="KW-0614">Plasmid</keyword>
<keyword id="KW-1185">Reference proteome</keyword>
<keyword id="KW-0813">Transport</keyword>
<comment type="function">
    <text>Required for the transfer of T-DNA to plants. Couples energy, by means of ATP hydrolysis, to T-DNA transport.</text>
</comment>
<comment type="subcellular location">
    <subcellularLocation>
        <location evidence="2">Cytoplasm</location>
    </subcellularLocation>
</comment>
<comment type="PTM">
    <text>Autophosphorylated.</text>
</comment>
<comment type="similarity">
    <text evidence="2">Belongs to the GSP E family.</text>
</comment>
<accession>P07169</accession>